<evidence type="ECO:0000255" key="1">
    <source>
        <dbReference type="HAMAP-Rule" id="MF_01576"/>
    </source>
</evidence>
<feature type="chain" id="PRO_1000185611" description="Bifunctional protein FolD">
    <location>
        <begin position="1"/>
        <end position="288"/>
    </location>
</feature>
<feature type="binding site" evidence="1">
    <location>
        <begin position="166"/>
        <end position="168"/>
    </location>
    <ligand>
        <name>NADP(+)</name>
        <dbReference type="ChEBI" id="CHEBI:58349"/>
    </ligand>
</feature>
<feature type="binding site" evidence="1">
    <location>
        <position position="232"/>
    </location>
    <ligand>
        <name>NADP(+)</name>
        <dbReference type="ChEBI" id="CHEBI:58349"/>
    </ligand>
</feature>
<gene>
    <name evidence="1" type="primary">folD</name>
    <name type="ordered locus">E2348C_0462</name>
</gene>
<protein>
    <recommendedName>
        <fullName evidence="1">Bifunctional protein FolD</fullName>
    </recommendedName>
    <domain>
        <recommendedName>
            <fullName evidence="1">Methylenetetrahydrofolate dehydrogenase</fullName>
            <ecNumber evidence="1">1.5.1.5</ecNumber>
        </recommendedName>
    </domain>
    <domain>
        <recommendedName>
            <fullName evidence="1">Methenyltetrahydrofolate cyclohydrolase</fullName>
            <ecNumber evidence="1">3.5.4.9</ecNumber>
        </recommendedName>
    </domain>
</protein>
<accession>B7UKK6</accession>
<proteinExistence type="inferred from homology"/>
<organism>
    <name type="scientific">Escherichia coli O127:H6 (strain E2348/69 / EPEC)</name>
    <dbReference type="NCBI Taxonomy" id="574521"/>
    <lineage>
        <taxon>Bacteria</taxon>
        <taxon>Pseudomonadati</taxon>
        <taxon>Pseudomonadota</taxon>
        <taxon>Gammaproteobacteria</taxon>
        <taxon>Enterobacterales</taxon>
        <taxon>Enterobacteriaceae</taxon>
        <taxon>Escherichia</taxon>
    </lineage>
</organism>
<comment type="function">
    <text evidence="1">Catalyzes the oxidation of 5,10-methylenetetrahydrofolate to 5,10-methenyltetrahydrofolate and then the hydrolysis of 5,10-methenyltetrahydrofolate to 10-formyltetrahydrofolate.</text>
</comment>
<comment type="catalytic activity">
    <reaction evidence="1">
        <text>(6R)-5,10-methylene-5,6,7,8-tetrahydrofolate + NADP(+) = (6R)-5,10-methenyltetrahydrofolate + NADPH</text>
        <dbReference type="Rhea" id="RHEA:22812"/>
        <dbReference type="ChEBI" id="CHEBI:15636"/>
        <dbReference type="ChEBI" id="CHEBI:57455"/>
        <dbReference type="ChEBI" id="CHEBI:57783"/>
        <dbReference type="ChEBI" id="CHEBI:58349"/>
        <dbReference type="EC" id="1.5.1.5"/>
    </reaction>
</comment>
<comment type="catalytic activity">
    <reaction evidence="1">
        <text>(6R)-5,10-methenyltetrahydrofolate + H2O = (6R)-10-formyltetrahydrofolate + H(+)</text>
        <dbReference type="Rhea" id="RHEA:23700"/>
        <dbReference type="ChEBI" id="CHEBI:15377"/>
        <dbReference type="ChEBI" id="CHEBI:15378"/>
        <dbReference type="ChEBI" id="CHEBI:57455"/>
        <dbReference type="ChEBI" id="CHEBI:195366"/>
        <dbReference type="EC" id="3.5.4.9"/>
    </reaction>
</comment>
<comment type="pathway">
    <text evidence="1">One-carbon metabolism; tetrahydrofolate interconversion.</text>
</comment>
<comment type="subunit">
    <text evidence="1">Homodimer.</text>
</comment>
<comment type="similarity">
    <text evidence="1">Belongs to the tetrahydrofolate dehydrogenase/cyclohydrolase family.</text>
</comment>
<reference key="1">
    <citation type="journal article" date="2009" name="J. Bacteriol.">
        <title>Complete genome sequence and comparative genome analysis of enteropathogenic Escherichia coli O127:H6 strain E2348/69.</title>
        <authorList>
            <person name="Iguchi A."/>
            <person name="Thomson N.R."/>
            <person name="Ogura Y."/>
            <person name="Saunders D."/>
            <person name="Ooka T."/>
            <person name="Henderson I.R."/>
            <person name="Harris D."/>
            <person name="Asadulghani M."/>
            <person name="Kurokawa K."/>
            <person name="Dean P."/>
            <person name="Kenny B."/>
            <person name="Quail M.A."/>
            <person name="Thurston S."/>
            <person name="Dougan G."/>
            <person name="Hayashi T."/>
            <person name="Parkhill J."/>
            <person name="Frankel G."/>
        </authorList>
    </citation>
    <scope>NUCLEOTIDE SEQUENCE [LARGE SCALE GENOMIC DNA]</scope>
    <source>
        <strain>E2348/69 / EPEC</strain>
    </source>
</reference>
<dbReference type="EC" id="1.5.1.5" evidence="1"/>
<dbReference type="EC" id="3.5.4.9" evidence="1"/>
<dbReference type="EMBL" id="FM180568">
    <property type="protein sequence ID" value="CAS08010.1"/>
    <property type="molecule type" value="Genomic_DNA"/>
</dbReference>
<dbReference type="RefSeq" id="WP_000729155.1">
    <property type="nucleotide sequence ID" value="NC_011601.1"/>
</dbReference>
<dbReference type="SMR" id="B7UKK6"/>
<dbReference type="GeneID" id="93776949"/>
<dbReference type="KEGG" id="ecg:E2348C_0462"/>
<dbReference type="HOGENOM" id="CLU_034045_2_1_6"/>
<dbReference type="UniPathway" id="UPA00193"/>
<dbReference type="Proteomes" id="UP000008205">
    <property type="component" value="Chromosome"/>
</dbReference>
<dbReference type="GO" id="GO:0005829">
    <property type="term" value="C:cytosol"/>
    <property type="evidence" value="ECO:0007669"/>
    <property type="project" value="TreeGrafter"/>
</dbReference>
<dbReference type="GO" id="GO:0004477">
    <property type="term" value="F:methenyltetrahydrofolate cyclohydrolase activity"/>
    <property type="evidence" value="ECO:0007669"/>
    <property type="project" value="UniProtKB-UniRule"/>
</dbReference>
<dbReference type="GO" id="GO:0004488">
    <property type="term" value="F:methylenetetrahydrofolate dehydrogenase (NADP+) activity"/>
    <property type="evidence" value="ECO:0007669"/>
    <property type="project" value="UniProtKB-UniRule"/>
</dbReference>
<dbReference type="GO" id="GO:0000105">
    <property type="term" value="P:L-histidine biosynthetic process"/>
    <property type="evidence" value="ECO:0007669"/>
    <property type="project" value="UniProtKB-KW"/>
</dbReference>
<dbReference type="GO" id="GO:0009086">
    <property type="term" value="P:methionine biosynthetic process"/>
    <property type="evidence" value="ECO:0007669"/>
    <property type="project" value="UniProtKB-KW"/>
</dbReference>
<dbReference type="GO" id="GO:0006164">
    <property type="term" value="P:purine nucleotide biosynthetic process"/>
    <property type="evidence" value="ECO:0007669"/>
    <property type="project" value="UniProtKB-KW"/>
</dbReference>
<dbReference type="GO" id="GO:0035999">
    <property type="term" value="P:tetrahydrofolate interconversion"/>
    <property type="evidence" value="ECO:0007669"/>
    <property type="project" value="UniProtKB-UniRule"/>
</dbReference>
<dbReference type="CDD" id="cd01080">
    <property type="entry name" value="NAD_bind_m-THF_DH_Cyclohyd"/>
    <property type="match status" value="1"/>
</dbReference>
<dbReference type="FunFam" id="3.40.50.10860:FF:000001">
    <property type="entry name" value="Bifunctional protein FolD"/>
    <property type="match status" value="1"/>
</dbReference>
<dbReference type="FunFam" id="3.40.50.720:FF:000006">
    <property type="entry name" value="Bifunctional protein FolD"/>
    <property type="match status" value="1"/>
</dbReference>
<dbReference type="Gene3D" id="3.40.50.10860">
    <property type="entry name" value="Leucine Dehydrogenase, chain A, domain 1"/>
    <property type="match status" value="1"/>
</dbReference>
<dbReference type="Gene3D" id="3.40.50.720">
    <property type="entry name" value="NAD(P)-binding Rossmann-like Domain"/>
    <property type="match status" value="1"/>
</dbReference>
<dbReference type="HAMAP" id="MF_01576">
    <property type="entry name" value="THF_DHG_CYH"/>
    <property type="match status" value="1"/>
</dbReference>
<dbReference type="InterPro" id="IPR046346">
    <property type="entry name" value="Aminoacid_DH-like_N_sf"/>
</dbReference>
<dbReference type="InterPro" id="IPR036291">
    <property type="entry name" value="NAD(P)-bd_dom_sf"/>
</dbReference>
<dbReference type="InterPro" id="IPR000672">
    <property type="entry name" value="THF_DH/CycHdrlase"/>
</dbReference>
<dbReference type="InterPro" id="IPR020630">
    <property type="entry name" value="THF_DH/CycHdrlase_cat_dom"/>
</dbReference>
<dbReference type="InterPro" id="IPR020867">
    <property type="entry name" value="THF_DH/CycHdrlase_CS"/>
</dbReference>
<dbReference type="InterPro" id="IPR020631">
    <property type="entry name" value="THF_DH/CycHdrlase_NAD-bd_dom"/>
</dbReference>
<dbReference type="NCBIfam" id="NF008058">
    <property type="entry name" value="PRK10792.1"/>
    <property type="match status" value="1"/>
</dbReference>
<dbReference type="NCBIfam" id="NF010783">
    <property type="entry name" value="PRK14186.1"/>
    <property type="match status" value="1"/>
</dbReference>
<dbReference type="PANTHER" id="PTHR48099:SF5">
    <property type="entry name" value="C-1-TETRAHYDROFOLATE SYNTHASE, CYTOPLASMIC"/>
    <property type="match status" value="1"/>
</dbReference>
<dbReference type="PANTHER" id="PTHR48099">
    <property type="entry name" value="C-1-TETRAHYDROFOLATE SYNTHASE, CYTOPLASMIC-RELATED"/>
    <property type="match status" value="1"/>
</dbReference>
<dbReference type="Pfam" id="PF00763">
    <property type="entry name" value="THF_DHG_CYH"/>
    <property type="match status" value="1"/>
</dbReference>
<dbReference type="Pfam" id="PF02882">
    <property type="entry name" value="THF_DHG_CYH_C"/>
    <property type="match status" value="1"/>
</dbReference>
<dbReference type="PRINTS" id="PR00085">
    <property type="entry name" value="THFDHDRGNASE"/>
</dbReference>
<dbReference type="SUPFAM" id="SSF53223">
    <property type="entry name" value="Aminoacid dehydrogenase-like, N-terminal domain"/>
    <property type="match status" value="1"/>
</dbReference>
<dbReference type="SUPFAM" id="SSF51735">
    <property type="entry name" value="NAD(P)-binding Rossmann-fold domains"/>
    <property type="match status" value="1"/>
</dbReference>
<dbReference type="PROSITE" id="PS00766">
    <property type="entry name" value="THF_DHG_CYH_1"/>
    <property type="match status" value="1"/>
</dbReference>
<dbReference type="PROSITE" id="PS00767">
    <property type="entry name" value="THF_DHG_CYH_2"/>
    <property type="match status" value="1"/>
</dbReference>
<keyword id="KW-0028">Amino-acid biosynthesis</keyword>
<keyword id="KW-0368">Histidine biosynthesis</keyword>
<keyword id="KW-0378">Hydrolase</keyword>
<keyword id="KW-0486">Methionine biosynthesis</keyword>
<keyword id="KW-0511">Multifunctional enzyme</keyword>
<keyword id="KW-0521">NADP</keyword>
<keyword id="KW-0554">One-carbon metabolism</keyword>
<keyword id="KW-0560">Oxidoreductase</keyword>
<keyword id="KW-0658">Purine biosynthesis</keyword>
<keyword id="KW-1185">Reference proteome</keyword>
<name>FOLD_ECO27</name>
<sequence>MAAKIIDGKTIAQQVRSEVAQKVQARIAAGLRAPGLAVVLVGSNPASQIYVASKRKACEEVGFVSRSYDLPETTSEAELLELIDALNADNTIDGILVQLPLPAGIDNVKVLERIHPDKDVDGFHPYNVGRLCQRAPRLRPCTPRGIVTLLERYNIDTFGLNAVVIGASNIVGRPMSMELLLAGCTTTVTHRFTKNLRHHVENADLLIVAVGKPGFIPGDWIKEGAIVIDVGINRLENGKVVGDVVFEDAAKRASYITPVPGGVGPMTVATLIENTLQACVEYHDPQGE</sequence>